<feature type="transit peptide" description="Mitochondrion" evidence="2">
    <location>
        <begin position="1"/>
        <end status="unknown"/>
    </location>
</feature>
<feature type="chain" id="PRO_0000273554" description="Large ribosomal subunit protein mL46">
    <location>
        <begin status="unknown"/>
        <end position="277"/>
    </location>
</feature>
<feature type="modified residue" description="N6-acetyllysine" evidence="1">
    <location>
        <position position="228"/>
    </location>
</feature>
<evidence type="ECO:0000250" key="1">
    <source>
        <dbReference type="UniProtKB" id="Q9H2W6"/>
    </source>
</evidence>
<evidence type="ECO:0000255" key="2"/>
<evidence type="ECO:0000305" key="3"/>
<comment type="subunit">
    <text evidence="1">Component of the mitochondrial ribosome large subunit (39S) which comprises a 16S rRNA and about 50 distinct proteins.</text>
</comment>
<comment type="subcellular location">
    <subcellularLocation>
        <location evidence="1">Mitochondrion</location>
    </subcellularLocation>
</comment>
<comment type="similarity">
    <text evidence="3">Belongs to the mitochondrion-specific ribosomal protein mL46 family.</text>
</comment>
<protein>
    <recommendedName>
        <fullName evidence="3">Large ribosomal subunit protein mL46</fullName>
    </recommendedName>
    <alternativeName>
        <fullName>39S ribosomal protein L46, mitochondrial</fullName>
        <shortName>L46mt</shortName>
        <shortName>MRP-L46</shortName>
    </alternativeName>
</protein>
<reference key="1">
    <citation type="submission" date="2005-08" db="EMBL/GenBank/DDBJ databases">
        <authorList>
            <consortium name="NIH - Mammalian Gene Collection (MGC) project"/>
        </authorList>
    </citation>
    <scope>NUCLEOTIDE SEQUENCE [LARGE SCALE MRNA]</scope>
    <source>
        <strain>Hereford</strain>
        <tissue>Heart ventricle</tissue>
    </source>
</reference>
<name>RM46_BOVIN</name>
<gene>
    <name type="primary">MRPL46</name>
</gene>
<accession>Q3SZ22</accession>
<organism>
    <name type="scientific">Bos taurus</name>
    <name type="common">Bovine</name>
    <dbReference type="NCBI Taxonomy" id="9913"/>
    <lineage>
        <taxon>Eukaryota</taxon>
        <taxon>Metazoa</taxon>
        <taxon>Chordata</taxon>
        <taxon>Craniata</taxon>
        <taxon>Vertebrata</taxon>
        <taxon>Euteleostomi</taxon>
        <taxon>Mammalia</taxon>
        <taxon>Eutheria</taxon>
        <taxon>Laurasiatheria</taxon>
        <taxon>Artiodactyla</taxon>
        <taxon>Ruminantia</taxon>
        <taxon>Pecora</taxon>
        <taxon>Bovidae</taxon>
        <taxon>Bovinae</taxon>
        <taxon>Bos</taxon>
    </lineage>
</organism>
<keyword id="KW-0007">Acetylation</keyword>
<keyword id="KW-0496">Mitochondrion</keyword>
<keyword id="KW-1185">Reference proteome</keyword>
<keyword id="KW-0687">Ribonucleoprotein</keyword>
<keyword id="KW-0689">Ribosomal protein</keyword>
<keyword id="KW-0809">Transit peptide</keyword>
<sequence length="277" mass="31726">MAAPTRRTVLGLARCWRRFESPWSLGSRSLTLAAAPSNSASPWRLLGALCLQRPPLVSKQLTPMQEEMAALLQQMEIERSLYSDHELRALDEAEQLEKKKSDLYEEKDEKNILLVQDLEDMWEQKFLQFKPGARITDADVKNDRSSLHRKLDRNLILLVKDKLGDQDVWMLPQAEWQPGETLRQTAERTLATLSENNLEAKFLGNAPCGHYKFKFPQAVRAEGSLGAKIFFFKALLLTGDFSPAVEKGRHVWASKEELGDYLKPKYLAQVRRFLLDL</sequence>
<proteinExistence type="evidence at transcript level"/>
<dbReference type="EMBL" id="BC103228">
    <property type="protein sequence ID" value="AAI03229.1"/>
    <property type="molecule type" value="mRNA"/>
</dbReference>
<dbReference type="RefSeq" id="NP_001029884.1">
    <property type="nucleotide sequence ID" value="NM_001034712.1"/>
</dbReference>
<dbReference type="SMR" id="Q3SZ22"/>
<dbReference type="FunCoup" id="Q3SZ22">
    <property type="interactions" value="1397"/>
</dbReference>
<dbReference type="STRING" id="9913.ENSBTAP00000026420"/>
<dbReference type="PaxDb" id="9913-ENSBTAP00000026420"/>
<dbReference type="Ensembl" id="ENSBTAT00000026420.5">
    <property type="protein sequence ID" value="ENSBTAP00000026420.4"/>
    <property type="gene ID" value="ENSBTAG00000019830.5"/>
</dbReference>
<dbReference type="GeneID" id="540720"/>
<dbReference type="KEGG" id="bta:540720"/>
<dbReference type="CTD" id="26589"/>
<dbReference type="VEuPathDB" id="HostDB:ENSBTAG00000019830"/>
<dbReference type="VGNC" id="VGNC:31641">
    <property type="gene designation" value="MRPL46"/>
</dbReference>
<dbReference type="eggNOG" id="KOG4548">
    <property type="taxonomic scope" value="Eukaryota"/>
</dbReference>
<dbReference type="GeneTree" id="ENSGT00390000015400"/>
<dbReference type="InParanoid" id="Q3SZ22"/>
<dbReference type="OMA" id="EKWDLYA"/>
<dbReference type="OrthoDB" id="194611at2759"/>
<dbReference type="Reactome" id="R-BTA-5389840">
    <property type="pathway name" value="Mitochondrial translation elongation"/>
</dbReference>
<dbReference type="Reactome" id="R-BTA-5419276">
    <property type="pathway name" value="Mitochondrial translation termination"/>
</dbReference>
<dbReference type="Proteomes" id="UP000009136">
    <property type="component" value="Chromosome 21"/>
</dbReference>
<dbReference type="Bgee" id="ENSBTAG00000019830">
    <property type="expression patterns" value="Expressed in tongue muscle and 106 other cell types or tissues"/>
</dbReference>
<dbReference type="GO" id="GO:0030054">
    <property type="term" value="C:cell junction"/>
    <property type="evidence" value="ECO:0007669"/>
    <property type="project" value="Ensembl"/>
</dbReference>
<dbReference type="GO" id="GO:0005829">
    <property type="term" value="C:cytosol"/>
    <property type="evidence" value="ECO:0007669"/>
    <property type="project" value="Ensembl"/>
</dbReference>
<dbReference type="GO" id="GO:0005743">
    <property type="term" value="C:mitochondrial inner membrane"/>
    <property type="evidence" value="ECO:0000304"/>
    <property type="project" value="Reactome"/>
</dbReference>
<dbReference type="GO" id="GO:0005762">
    <property type="term" value="C:mitochondrial large ribosomal subunit"/>
    <property type="evidence" value="ECO:0000250"/>
    <property type="project" value="UniProtKB"/>
</dbReference>
<dbReference type="GO" id="GO:0005654">
    <property type="term" value="C:nucleoplasm"/>
    <property type="evidence" value="ECO:0007669"/>
    <property type="project" value="Ensembl"/>
</dbReference>
<dbReference type="GO" id="GO:0003735">
    <property type="term" value="F:structural constituent of ribosome"/>
    <property type="evidence" value="ECO:0000318"/>
    <property type="project" value="GO_Central"/>
</dbReference>
<dbReference type="CDD" id="cd04661">
    <property type="entry name" value="NUDIX_MRP_L46"/>
    <property type="match status" value="1"/>
</dbReference>
<dbReference type="FunFam" id="3.90.79.10:FF:000018">
    <property type="entry name" value="39S ribosomal protein L46, mitochondrial"/>
    <property type="match status" value="1"/>
</dbReference>
<dbReference type="Gene3D" id="3.90.79.10">
    <property type="entry name" value="Nucleoside Triphosphate Pyrophosphohydrolase"/>
    <property type="match status" value="1"/>
</dbReference>
<dbReference type="InterPro" id="IPR015797">
    <property type="entry name" value="NUDIX_hydrolase-like_dom_sf"/>
</dbReference>
<dbReference type="InterPro" id="IPR040008">
    <property type="entry name" value="Ribosomal_mL46"/>
</dbReference>
<dbReference type="InterPro" id="IPR021757">
    <property type="entry name" value="Ribosomal_mL46_N"/>
</dbReference>
<dbReference type="InterPro" id="IPR033650">
    <property type="entry name" value="Ribosomal_mL46_NUDIX"/>
</dbReference>
<dbReference type="PANTHER" id="PTHR13124">
    <property type="entry name" value="39S RIBOSOMAL PROTEIN L46, MITOCHONDRIAL PRECURSOR-RELATED"/>
    <property type="match status" value="1"/>
</dbReference>
<dbReference type="PANTHER" id="PTHR13124:SF12">
    <property type="entry name" value="LARGE RIBOSOMAL SUBUNIT PROTEIN ML46"/>
    <property type="match status" value="1"/>
</dbReference>
<dbReference type="Pfam" id="PF11788">
    <property type="entry name" value="MRP-L46"/>
    <property type="match status" value="1"/>
</dbReference>
<dbReference type="SUPFAM" id="SSF55811">
    <property type="entry name" value="Nudix"/>
    <property type="match status" value="1"/>
</dbReference>